<feature type="chain" id="PRO_0000187991" description="ATP-dependent dethiobiotin synthetase BioD">
    <location>
        <begin position="1"/>
        <end position="238"/>
    </location>
</feature>
<feature type="active site" evidence="1">
    <location>
        <position position="37"/>
    </location>
</feature>
<feature type="binding site" evidence="1">
    <location>
        <begin position="12"/>
        <end position="17"/>
    </location>
    <ligand>
        <name>ATP</name>
        <dbReference type="ChEBI" id="CHEBI:30616"/>
    </ligand>
</feature>
<feature type="binding site" evidence="1">
    <location>
        <position position="16"/>
    </location>
    <ligand>
        <name>Mg(2+)</name>
        <dbReference type="ChEBI" id="CHEBI:18420"/>
    </ligand>
</feature>
<feature type="binding site" evidence="1">
    <location>
        <position position="41"/>
    </location>
    <ligand>
        <name>substrate</name>
    </ligand>
</feature>
<feature type="binding site" evidence="1">
    <location>
        <position position="50"/>
    </location>
    <ligand>
        <name>ATP</name>
        <dbReference type="ChEBI" id="CHEBI:30616"/>
    </ligand>
</feature>
<feature type="binding site" evidence="1">
    <location>
        <position position="50"/>
    </location>
    <ligand>
        <name>Mg(2+)</name>
        <dbReference type="ChEBI" id="CHEBI:18420"/>
    </ligand>
</feature>
<feature type="binding site" evidence="1">
    <location>
        <begin position="109"/>
        <end position="112"/>
    </location>
    <ligand>
        <name>ATP</name>
        <dbReference type="ChEBI" id="CHEBI:30616"/>
    </ligand>
</feature>
<feature type="binding site" evidence="1">
    <location>
        <position position="109"/>
    </location>
    <ligand>
        <name>Mg(2+)</name>
        <dbReference type="ChEBI" id="CHEBI:18420"/>
    </ligand>
</feature>
<feature type="binding site" evidence="1">
    <location>
        <begin position="170"/>
        <end position="171"/>
    </location>
    <ligand>
        <name>ATP</name>
        <dbReference type="ChEBI" id="CHEBI:30616"/>
    </ligand>
</feature>
<feature type="binding site" evidence="1">
    <location>
        <begin position="200"/>
        <end position="202"/>
    </location>
    <ligand>
        <name>ATP</name>
        <dbReference type="ChEBI" id="CHEBI:30616"/>
    </ligand>
</feature>
<dbReference type="EC" id="6.3.3.3" evidence="1"/>
<dbReference type="EMBL" id="AL939108">
    <property type="protein sequence ID" value="CAC01470.1"/>
    <property type="molecule type" value="Genomic_DNA"/>
</dbReference>
<dbReference type="RefSeq" id="NP_625534.1">
    <property type="nucleotide sequence ID" value="NC_003888.3"/>
</dbReference>
<dbReference type="RefSeq" id="WP_011027666.1">
    <property type="nucleotide sequence ID" value="NZ_VNID01000006.1"/>
</dbReference>
<dbReference type="SMR" id="Q9FCC1"/>
<dbReference type="FunCoup" id="Q9FCC1">
    <property type="interactions" value="124"/>
</dbReference>
<dbReference type="STRING" id="100226.gene:17758829"/>
<dbReference type="PaxDb" id="100226-SCO1246"/>
<dbReference type="KEGG" id="sco:SCO1246"/>
<dbReference type="PATRIC" id="fig|100226.15.peg.1246"/>
<dbReference type="eggNOG" id="COG0132">
    <property type="taxonomic scope" value="Bacteria"/>
</dbReference>
<dbReference type="HOGENOM" id="CLU_072551_1_0_11"/>
<dbReference type="InParanoid" id="Q9FCC1"/>
<dbReference type="OrthoDB" id="9802610at2"/>
<dbReference type="PhylomeDB" id="Q9FCC1"/>
<dbReference type="UniPathway" id="UPA00078">
    <property type="reaction ID" value="UER00161"/>
</dbReference>
<dbReference type="Proteomes" id="UP000001973">
    <property type="component" value="Chromosome"/>
</dbReference>
<dbReference type="GO" id="GO:0005829">
    <property type="term" value="C:cytosol"/>
    <property type="evidence" value="ECO:0000318"/>
    <property type="project" value="GO_Central"/>
</dbReference>
<dbReference type="GO" id="GO:0005524">
    <property type="term" value="F:ATP binding"/>
    <property type="evidence" value="ECO:0007669"/>
    <property type="project" value="UniProtKB-UniRule"/>
</dbReference>
<dbReference type="GO" id="GO:0004141">
    <property type="term" value="F:dethiobiotin synthase activity"/>
    <property type="evidence" value="ECO:0000318"/>
    <property type="project" value="GO_Central"/>
</dbReference>
<dbReference type="GO" id="GO:0000287">
    <property type="term" value="F:magnesium ion binding"/>
    <property type="evidence" value="ECO:0007669"/>
    <property type="project" value="UniProtKB-UniRule"/>
</dbReference>
<dbReference type="GO" id="GO:0009102">
    <property type="term" value="P:biotin biosynthetic process"/>
    <property type="evidence" value="ECO:0000318"/>
    <property type="project" value="GO_Central"/>
</dbReference>
<dbReference type="CDD" id="cd03109">
    <property type="entry name" value="DTBS"/>
    <property type="match status" value="1"/>
</dbReference>
<dbReference type="Gene3D" id="3.40.50.300">
    <property type="entry name" value="P-loop containing nucleotide triphosphate hydrolases"/>
    <property type="match status" value="1"/>
</dbReference>
<dbReference type="HAMAP" id="MF_00336">
    <property type="entry name" value="BioD"/>
    <property type="match status" value="1"/>
</dbReference>
<dbReference type="InterPro" id="IPR004472">
    <property type="entry name" value="DTB_synth_BioD"/>
</dbReference>
<dbReference type="InterPro" id="IPR027417">
    <property type="entry name" value="P-loop_NTPase"/>
</dbReference>
<dbReference type="NCBIfam" id="TIGR00347">
    <property type="entry name" value="bioD"/>
    <property type="match status" value="1"/>
</dbReference>
<dbReference type="PANTHER" id="PTHR43210">
    <property type="entry name" value="DETHIOBIOTIN SYNTHETASE"/>
    <property type="match status" value="1"/>
</dbReference>
<dbReference type="PANTHER" id="PTHR43210:SF5">
    <property type="entry name" value="DETHIOBIOTIN SYNTHETASE"/>
    <property type="match status" value="1"/>
</dbReference>
<dbReference type="Pfam" id="PF13500">
    <property type="entry name" value="AAA_26"/>
    <property type="match status" value="1"/>
</dbReference>
<dbReference type="PIRSF" id="PIRSF006755">
    <property type="entry name" value="DTB_synth"/>
    <property type="match status" value="1"/>
</dbReference>
<dbReference type="SUPFAM" id="SSF52540">
    <property type="entry name" value="P-loop containing nucleoside triphosphate hydrolases"/>
    <property type="match status" value="1"/>
</dbReference>
<reference key="1">
    <citation type="journal article" date="2002" name="Nature">
        <title>Complete genome sequence of the model actinomycete Streptomyces coelicolor A3(2).</title>
        <authorList>
            <person name="Bentley S.D."/>
            <person name="Chater K.F."/>
            <person name="Cerdeno-Tarraga A.-M."/>
            <person name="Challis G.L."/>
            <person name="Thomson N.R."/>
            <person name="James K.D."/>
            <person name="Harris D.E."/>
            <person name="Quail M.A."/>
            <person name="Kieser H."/>
            <person name="Harper D."/>
            <person name="Bateman A."/>
            <person name="Brown S."/>
            <person name="Chandra G."/>
            <person name="Chen C.W."/>
            <person name="Collins M."/>
            <person name="Cronin A."/>
            <person name="Fraser A."/>
            <person name="Goble A."/>
            <person name="Hidalgo J."/>
            <person name="Hornsby T."/>
            <person name="Howarth S."/>
            <person name="Huang C.-H."/>
            <person name="Kieser T."/>
            <person name="Larke L."/>
            <person name="Murphy L.D."/>
            <person name="Oliver K."/>
            <person name="O'Neil S."/>
            <person name="Rabbinowitsch E."/>
            <person name="Rajandream M.A."/>
            <person name="Rutherford K.M."/>
            <person name="Rutter S."/>
            <person name="Seeger K."/>
            <person name="Saunders D."/>
            <person name="Sharp S."/>
            <person name="Squares R."/>
            <person name="Squares S."/>
            <person name="Taylor K."/>
            <person name="Warren T."/>
            <person name="Wietzorrek A."/>
            <person name="Woodward J.R."/>
            <person name="Barrell B.G."/>
            <person name="Parkhill J."/>
            <person name="Hopwood D.A."/>
        </authorList>
    </citation>
    <scope>NUCLEOTIDE SEQUENCE [LARGE SCALE GENOMIC DNA]</scope>
    <source>
        <strain>ATCC BAA-471 / A3(2) / M145</strain>
    </source>
</reference>
<organism>
    <name type="scientific">Streptomyces coelicolor (strain ATCC BAA-471 / A3(2) / M145)</name>
    <dbReference type="NCBI Taxonomy" id="100226"/>
    <lineage>
        <taxon>Bacteria</taxon>
        <taxon>Bacillati</taxon>
        <taxon>Actinomycetota</taxon>
        <taxon>Actinomycetes</taxon>
        <taxon>Kitasatosporales</taxon>
        <taxon>Streptomycetaceae</taxon>
        <taxon>Streptomyces</taxon>
        <taxon>Streptomyces albidoflavus group</taxon>
    </lineage>
</organism>
<evidence type="ECO:0000255" key="1">
    <source>
        <dbReference type="HAMAP-Rule" id="MF_00336"/>
    </source>
</evidence>
<proteinExistence type="inferred from homology"/>
<comment type="function">
    <text evidence="1">Catalyzes a mechanistically unusual reaction, the ATP-dependent insertion of CO2 between the N7 and N8 nitrogen atoms of 7,8-diaminopelargonic acid (DAPA, also called 7,8-diammoniononanoate) to form a ureido ring.</text>
</comment>
<comment type="catalytic activity">
    <reaction evidence="1">
        <text>(7R,8S)-7,8-diammoniononanoate + CO2 + ATP = (4R,5S)-dethiobiotin + ADP + phosphate + 3 H(+)</text>
        <dbReference type="Rhea" id="RHEA:15805"/>
        <dbReference type="ChEBI" id="CHEBI:15378"/>
        <dbReference type="ChEBI" id="CHEBI:16526"/>
        <dbReference type="ChEBI" id="CHEBI:30616"/>
        <dbReference type="ChEBI" id="CHEBI:43474"/>
        <dbReference type="ChEBI" id="CHEBI:149469"/>
        <dbReference type="ChEBI" id="CHEBI:149473"/>
        <dbReference type="ChEBI" id="CHEBI:456216"/>
        <dbReference type="EC" id="6.3.3.3"/>
    </reaction>
</comment>
<comment type="cofactor">
    <cofactor evidence="1">
        <name>Mg(2+)</name>
        <dbReference type="ChEBI" id="CHEBI:18420"/>
    </cofactor>
</comment>
<comment type="pathway">
    <text evidence="1">Cofactor biosynthesis; biotin biosynthesis; biotin from 7,8-diaminononanoate: step 1/2.</text>
</comment>
<comment type="subunit">
    <text evidence="1">Homodimer.</text>
</comment>
<comment type="subcellular location">
    <subcellularLocation>
        <location evidence="1">Cytoplasm</location>
    </subcellularLocation>
</comment>
<comment type="similarity">
    <text evidence="1">Belongs to the dethiobiotin synthetase family.</text>
</comment>
<name>BIOD_STRCO</name>
<gene>
    <name evidence="1" type="primary">bioD</name>
    <name type="ordered locus">SCO1246</name>
    <name type="ORF">2SCG1.21</name>
</gene>
<protein>
    <recommendedName>
        <fullName evidence="1">ATP-dependent dethiobiotin synthetase BioD</fullName>
        <ecNumber evidence="1">6.3.3.3</ecNumber>
    </recommendedName>
    <alternativeName>
        <fullName evidence="1">DTB synthetase</fullName>
        <shortName evidence="1">DTBS</shortName>
    </alternativeName>
    <alternativeName>
        <fullName evidence="1">Dethiobiotin synthase</fullName>
    </alternativeName>
</protein>
<sequence>MPVLVITGTGTEVGKTVVTAAVAAAALAGGRTVAVLKAAQTGVGPDEAGDAQEVARLAGTATVAEVARFPDPLAPGTAARRAGRTPVRPEEVAEAATKLATEHDLVLVEGAGGLLVRFDAEGGTLADVAGLLDAPVLLVTSAGLGTLNTTELTARELRSRGLELPGLVIGSWPGAPDLAARCNLADLPDVSGAPLLGAVPAGAGSLSPAAFRSAAPHWLAPPLDGTWDADAFGDRHGP</sequence>
<accession>Q9FCC1</accession>
<keyword id="KW-0067">ATP-binding</keyword>
<keyword id="KW-0093">Biotin biosynthesis</keyword>
<keyword id="KW-0963">Cytoplasm</keyword>
<keyword id="KW-0436">Ligase</keyword>
<keyword id="KW-0460">Magnesium</keyword>
<keyword id="KW-0479">Metal-binding</keyword>
<keyword id="KW-0547">Nucleotide-binding</keyword>
<keyword id="KW-1185">Reference proteome</keyword>